<feature type="chain" id="PRO_0000460282" description="P2X purinoceptor 5">
    <location>
        <begin position="1"/>
        <end position="455"/>
    </location>
</feature>
<feature type="topological domain" description="Cytoplasmic" evidence="9">
    <location>
        <begin position="1"/>
        <end position="30"/>
    </location>
</feature>
<feature type="transmembrane region" description="Helical" evidence="3">
    <location>
        <begin position="31"/>
        <end position="50"/>
    </location>
</feature>
<feature type="topological domain" description="Extracellular" evidence="9">
    <location>
        <begin position="51"/>
        <end position="339"/>
    </location>
</feature>
<feature type="transmembrane region" description="Helical" evidence="3">
    <location>
        <begin position="340"/>
        <end position="362"/>
    </location>
</feature>
<feature type="topological domain" description="Cytoplasmic" evidence="9">
    <location>
        <begin position="363"/>
        <end position="455"/>
    </location>
</feature>
<feature type="binding site" evidence="1">
    <location>
        <begin position="69"/>
        <end position="71"/>
    </location>
    <ligand>
        <name>ATP</name>
        <dbReference type="ChEBI" id="CHEBI:30616"/>
    </ligand>
</feature>
<feature type="binding site" evidence="1">
    <location>
        <position position="189"/>
    </location>
    <ligand>
        <name>ATP</name>
        <dbReference type="ChEBI" id="CHEBI:30616"/>
    </ligand>
</feature>
<feature type="binding site" evidence="1">
    <location>
        <begin position="294"/>
        <end position="296"/>
    </location>
    <ligand>
        <name>ATP</name>
        <dbReference type="ChEBI" id="CHEBI:30616"/>
    </ligand>
</feature>
<feature type="binding site" evidence="1">
    <location>
        <position position="314"/>
    </location>
    <ligand>
        <name>ATP</name>
        <dbReference type="ChEBI" id="CHEBI:30616"/>
    </ligand>
</feature>
<feature type="glycosylation site" description="N-linked (GlcNAc...) asparagine" evidence="5">
    <location>
        <position position="77"/>
    </location>
</feature>
<feature type="glycosylation site" description="N-linked (GlcNAc...) asparagine" evidence="5">
    <location>
        <position position="157"/>
    </location>
</feature>
<feature type="glycosylation site" description="N-linked (GlcNAc...) asparagine" evidence="5">
    <location>
        <position position="202"/>
    </location>
</feature>
<feature type="disulfide bond" evidence="1">
    <location>
        <begin position="118"/>
        <end position="169"/>
    </location>
</feature>
<feature type="disulfide bond" evidence="1">
    <location>
        <begin position="129"/>
        <end position="152"/>
    </location>
</feature>
<feature type="disulfide bond" evidence="1">
    <location>
        <begin position="135"/>
        <end position="163"/>
    </location>
</feature>
<feature type="disulfide bond" evidence="1">
    <location>
        <begin position="220"/>
        <end position="229"/>
    </location>
</feature>
<feature type="disulfide bond" evidence="1">
    <location>
        <begin position="263"/>
        <end position="272"/>
    </location>
</feature>
<feature type="mutagenesis site" description="Affects the relative permeability of cations to anions." evidence="8">
    <original>K</original>
    <variation>E</variation>
    <variation>D</variation>
    <location>
        <position position="17"/>
    </location>
</feature>
<feature type="sequence conflict" description="In Ref. 1; AAK49936/AAK49937." evidence="9" ref="1">
    <original>G</original>
    <variation>R</variation>
    <location>
        <position position="317"/>
    </location>
</feature>
<feature type="sequence conflict" description="In Ref. 4; AAI38190." evidence="9" ref="4">
    <original>A</original>
    <variation>V</variation>
    <location>
        <position position="415"/>
    </location>
</feature>
<sequence>MGQAAWKGFVLSLFDYKTAKFVVAKSKKVGLLYRVLQLTILLYLLIWVFLIKKSYQDIDTSLQSAVVTKVKGVAYTNTTMLGERLWDVADFVIPSQGENVFFVVTNLIVTPNQRQGICAEREGIPDGECSEDTDCHAGESVVAGHGLKTGRCLRVGNSTRGTCEIFAWCPVETKSMPTDPLLKDAEGFTIFIKNFIRFPKFNFSKANVLETGNKHFLKTCHFSSTNLYCPIFRLGSIVRWAGADFQDIALKGGVIGIHIEWDCDLDKAASHCNPHYYFNRLDNKHTQSISSGYNFRFARYYRDPHGVEFRDLMKAYGIRFDVIVNGKAGKFSIIPTVINIGSGLALMGAGAFFCDLVLIYLIRKSEFYRDKKFEKVRGQKEEDNVEVEANEMEQELPEDKPLERVHQDEQALELAQSGRKQNSNCQVLFEPARSGLQENAFVNMKPSQILQTVKT</sequence>
<proteinExistence type="evidence at protein level"/>
<name>P2RX5_MOUSE</name>
<evidence type="ECO:0000250" key="1">
    <source>
        <dbReference type="UniProtKB" id="F8W463"/>
    </source>
</evidence>
<evidence type="ECO:0000250" key="2">
    <source>
        <dbReference type="UniProtKB" id="P51578"/>
    </source>
</evidence>
<evidence type="ECO:0000250" key="3">
    <source>
        <dbReference type="UniProtKB" id="P56373"/>
    </source>
</evidence>
<evidence type="ECO:0000250" key="4">
    <source>
        <dbReference type="UniProtKB" id="Q93086"/>
    </source>
</evidence>
<evidence type="ECO:0000255" key="5"/>
<evidence type="ECO:0000269" key="6">
    <source>
    </source>
</evidence>
<evidence type="ECO:0000269" key="7">
    <source>
    </source>
</evidence>
<evidence type="ECO:0000269" key="8">
    <source>
    </source>
</evidence>
<evidence type="ECO:0000305" key="9"/>
<evidence type="ECO:0000312" key="10">
    <source>
        <dbReference type="MGI" id="MGI:2137026"/>
    </source>
</evidence>
<organism>
    <name type="scientific">Mus musculus</name>
    <name type="common">Mouse</name>
    <dbReference type="NCBI Taxonomy" id="10090"/>
    <lineage>
        <taxon>Eukaryota</taxon>
        <taxon>Metazoa</taxon>
        <taxon>Chordata</taxon>
        <taxon>Craniata</taxon>
        <taxon>Vertebrata</taxon>
        <taxon>Euteleostomi</taxon>
        <taxon>Mammalia</taxon>
        <taxon>Eutheria</taxon>
        <taxon>Euarchontoglires</taxon>
        <taxon>Glires</taxon>
        <taxon>Rodentia</taxon>
        <taxon>Myomorpha</taxon>
        <taxon>Muroidea</taxon>
        <taxon>Muridae</taxon>
        <taxon>Murinae</taxon>
        <taxon>Mus</taxon>
        <taxon>Mus</taxon>
    </lineage>
</organism>
<gene>
    <name evidence="10" type="primary">P2rx5</name>
</gene>
<dbReference type="EMBL" id="AF333331">
    <property type="protein sequence ID" value="AAK49936.1"/>
    <property type="molecule type" value="mRNA"/>
</dbReference>
<dbReference type="EMBL" id="AH010724">
    <property type="protein sequence ID" value="AAK49937.1"/>
    <property type="molecule type" value="Genomic_DNA"/>
</dbReference>
<dbReference type="EMBL" id="AF333332">
    <property type="protein sequence ID" value="AAK49937.1"/>
    <property type="status" value="JOINED"/>
    <property type="molecule type" value="Genomic_DNA"/>
</dbReference>
<dbReference type="EMBL" id="AK134662">
    <property type="protein sequence ID" value="BAE22231.1"/>
    <property type="molecule type" value="mRNA"/>
</dbReference>
<dbReference type="EMBL" id="AL670399">
    <property type="status" value="NOT_ANNOTATED_CDS"/>
    <property type="molecule type" value="Genomic_DNA"/>
</dbReference>
<dbReference type="EMBL" id="BC138189">
    <property type="protein sequence ID" value="AAI38190.1"/>
    <property type="molecule type" value="mRNA"/>
</dbReference>
<dbReference type="CCDS" id="CCDS24998.1"/>
<dbReference type="RefSeq" id="NP_201578.2">
    <property type="nucleotide sequence ID" value="NM_033321.4"/>
</dbReference>
<dbReference type="SMR" id="Q91VE2"/>
<dbReference type="GlyGen" id="Q91VE2">
    <property type="glycosylation" value="3 sites, 1 N-linked glycan (1 site)"/>
</dbReference>
<dbReference type="PhosphoSitePlus" id="Q91VE2"/>
<dbReference type="PaxDb" id="10090-ENSMUSP00000006104"/>
<dbReference type="ProteomicsDB" id="341200"/>
<dbReference type="DNASU" id="94045"/>
<dbReference type="Ensembl" id="ENSMUST00000006104.10">
    <property type="protein sequence ID" value="ENSMUSP00000006104.4"/>
    <property type="gene ID" value="ENSMUSG00000005950.15"/>
</dbReference>
<dbReference type="GeneID" id="94045"/>
<dbReference type="KEGG" id="mmu:94045"/>
<dbReference type="AGR" id="MGI:2137026"/>
<dbReference type="CTD" id="5026"/>
<dbReference type="MGI" id="MGI:2137026">
    <property type="gene designation" value="P2rx5"/>
</dbReference>
<dbReference type="VEuPathDB" id="HostDB:ENSMUSG00000005950"/>
<dbReference type="eggNOG" id="ENOG502QSUI">
    <property type="taxonomic scope" value="Eukaryota"/>
</dbReference>
<dbReference type="GeneTree" id="ENSGT01020000230351"/>
<dbReference type="OMA" id="GIHIEWN"/>
<dbReference type="OrthoDB" id="494673at2759"/>
<dbReference type="TreeFam" id="TF328633"/>
<dbReference type="Reactome" id="R-MMU-139853">
    <property type="pathway name" value="Elevation of cytosolic Ca2+ levels"/>
</dbReference>
<dbReference type="Reactome" id="R-MMU-418346">
    <property type="pathway name" value="Platelet homeostasis"/>
</dbReference>
<dbReference type="BioGRID-ORCS" id="94045">
    <property type="hits" value="1 hit in 78 CRISPR screens"/>
</dbReference>
<dbReference type="ChiTaRS" id="P2rx5">
    <property type="organism name" value="mouse"/>
</dbReference>
<dbReference type="Proteomes" id="UP000000589">
    <property type="component" value="Chromosome 11"/>
</dbReference>
<dbReference type="Bgee" id="ENSMUSG00000005950">
    <property type="expression patterns" value="Expressed in brown adipose tissue and 98 other cell types or tissues"/>
</dbReference>
<dbReference type="GO" id="GO:0005886">
    <property type="term" value="C:plasma membrane"/>
    <property type="evidence" value="ECO:0000250"/>
    <property type="project" value="UniProtKB"/>
</dbReference>
<dbReference type="GO" id="GO:0098794">
    <property type="term" value="C:postsynapse"/>
    <property type="evidence" value="ECO:0007669"/>
    <property type="project" value="GOC"/>
</dbReference>
<dbReference type="GO" id="GO:0005524">
    <property type="term" value="F:ATP binding"/>
    <property type="evidence" value="ECO:0007669"/>
    <property type="project" value="UniProtKB-KW"/>
</dbReference>
<dbReference type="GO" id="GO:0004931">
    <property type="term" value="F:extracellularly ATP-gated monoatomic cation channel activity"/>
    <property type="evidence" value="ECO:0000314"/>
    <property type="project" value="MGI"/>
</dbReference>
<dbReference type="GO" id="GO:0042802">
    <property type="term" value="F:identical protein binding"/>
    <property type="evidence" value="ECO:0007669"/>
    <property type="project" value="Ensembl"/>
</dbReference>
<dbReference type="GO" id="GO:0099095">
    <property type="term" value="F:ligand-gated monoatomic anion channel activity"/>
    <property type="evidence" value="ECO:0000314"/>
    <property type="project" value="UniProtKB"/>
</dbReference>
<dbReference type="GO" id="GO:0001614">
    <property type="term" value="F:purinergic nucleotide receptor activity"/>
    <property type="evidence" value="ECO:0007669"/>
    <property type="project" value="InterPro"/>
</dbReference>
<dbReference type="GO" id="GO:0005244">
    <property type="term" value="F:voltage-gated monoatomic ion channel activity"/>
    <property type="evidence" value="ECO:0007669"/>
    <property type="project" value="Ensembl"/>
</dbReference>
<dbReference type="GO" id="GO:0007166">
    <property type="term" value="P:cell surface receptor signaling pathway"/>
    <property type="evidence" value="ECO:0000304"/>
    <property type="project" value="MGI"/>
</dbReference>
<dbReference type="GO" id="GO:0006821">
    <property type="term" value="P:chloride transport"/>
    <property type="evidence" value="ECO:0000314"/>
    <property type="project" value="UniProtKB"/>
</dbReference>
<dbReference type="GO" id="GO:0036179">
    <property type="term" value="P:osteoclast maturation"/>
    <property type="evidence" value="ECO:0000315"/>
    <property type="project" value="UniProtKB"/>
</dbReference>
<dbReference type="GO" id="GO:1905665">
    <property type="term" value="P:positive regulation of calcium ion import across plasma membrane"/>
    <property type="evidence" value="ECO:0007669"/>
    <property type="project" value="Ensembl"/>
</dbReference>
<dbReference type="GO" id="GO:0043416">
    <property type="term" value="P:regulation of skeletal muscle tissue regeneration"/>
    <property type="evidence" value="ECO:0007669"/>
    <property type="project" value="Ensembl"/>
</dbReference>
<dbReference type="GO" id="GO:0033198">
    <property type="term" value="P:response to ATP"/>
    <property type="evidence" value="ECO:0007669"/>
    <property type="project" value="Ensembl"/>
</dbReference>
<dbReference type="GO" id="GO:0051592">
    <property type="term" value="P:response to calcium ion"/>
    <property type="evidence" value="ECO:0007669"/>
    <property type="project" value="Ensembl"/>
</dbReference>
<dbReference type="GO" id="GO:0009268">
    <property type="term" value="P:response to pH"/>
    <property type="evidence" value="ECO:0007669"/>
    <property type="project" value="Ensembl"/>
</dbReference>
<dbReference type="GO" id="GO:0010043">
    <property type="term" value="P:response to zinc ion"/>
    <property type="evidence" value="ECO:0007669"/>
    <property type="project" value="Ensembl"/>
</dbReference>
<dbReference type="FunFam" id="2.60.490.10:FF:000001">
    <property type="entry name" value="P2X purinoceptor"/>
    <property type="match status" value="1"/>
</dbReference>
<dbReference type="FunFam" id="1.10.287.940:FF:000010">
    <property type="entry name" value="P2X receptor E"/>
    <property type="match status" value="1"/>
</dbReference>
<dbReference type="Gene3D" id="1.10.287.940">
    <property type="entry name" value="atp-gated p2x4 ion channel"/>
    <property type="match status" value="1"/>
</dbReference>
<dbReference type="Gene3D" id="2.60.490.10">
    <property type="entry name" value="atp-gated p2x4 ion channel domain"/>
    <property type="match status" value="1"/>
</dbReference>
<dbReference type="InterPro" id="IPR003048">
    <property type="entry name" value="P2X5_purnocptor"/>
</dbReference>
<dbReference type="InterPro" id="IPR027309">
    <property type="entry name" value="P2X_extracellular_dom_sf"/>
</dbReference>
<dbReference type="InterPro" id="IPR001429">
    <property type="entry name" value="P2X_purnocptor"/>
</dbReference>
<dbReference type="InterPro" id="IPR053792">
    <property type="entry name" value="P2X_RECEPTOR_CS"/>
</dbReference>
<dbReference type="NCBIfam" id="TIGR00863">
    <property type="entry name" value="P2X"/>
    <property type="match status" value="1"/>
</dbReference>
<dbReference type="PANTHER" id="PTHR10125">
    <property type="entry name" value="P2X PURINOCEPTOR"/>
    <property type="match status" value="1"/>
</dbReference>
<dbReference type="PANTHER" id="PTHR10125:SF12">
    <property type="entry name" value="P2X PURINOCEPTOR 5"/>
    <property type="match status" value="1"/>
</dbReference>
<dbReference type="Pfam" id="PF00864">
    <property type="entry name" value="P2X_receptor"/>
    <property type="match status" value="1"/>
</dbReference>
<dbReference type="PIRSF" id="PIRSF005713">
    <property type="entry name" value="P2X_purinoceptor"/>
    <property type="match status" value="1"/>
</dbReference>
<dbReference type="PRINTS" id="PR01312">
    <property type="entry name" value="P2X5RECEPTOR"/>
</dbReference>
<dbReference type="PRINTS" id="PR01307">
    <property type="entry name" value="P2XRECEPTOR"/>
</dbReference>
<dbReference type="PROSITE" id="PS01212">
    <property type="entry name" value="P2X_RECEPTOR"/>
    <property type="match status" value="1"/>
</dbReference>
<accession>Q91VE2</accession>
<accession>B9EHM6</accession>
<accession>Q3UYI1</accession>
<keyword id="KW-0067">ATP-binding</keyword>
<keyword id="KW-1003">Cell membrane</keyword>
<keyword id="KW-1015">Disulfide bond</keyword>
<keyword id="KW-0325">Glycoprotein</keyword>
<keyword id="KW-0407">Ion channel</keyword>
<keyword id="KW-0406">Ion transport</keyword>
<keyword id="KW-1071">Ligand-gated ion channel</keyword>
<keyword id="KW-0472">Membrane</keyword>
<keyword id="KW-0547">Nucleotide-binding</keyword>
<keyword id="KW-0675">Receptor</keyword>
<keyword id="KW-1185">Reference proteome</keyword>
<keyword id="KW-0812">Transmembrane</keyword>
<keyword id="KW-1133">Transmembrane helix</keyword>
<keyword id="KW-0813">Transport</keyword>
<reference key="1">
    <citation type="journal article" date="2001" name="Gene">
        <title>Gene structure, chromosomal localization, cDNA cloning and expression of the mouse ATP-gated ionotropic receptor P2X5 subunit.</title>
        <authorList>
            <person name="Cox J.A."/>
            <person name="Barmina O."/>
            <person name="Voigt M.M."/>
        </authorList>
    </citation>
    <scope>NUCLEOTIDE SEQUENCE [MRNA]</scope>
    <scope>TISSUE SPECIFICITY</scope>
    <scope>FUNCTION</scope>
    <source>
        <strain>129/SvJ</strain>
        <tissue>Heart</tissue>
    </source>
</reference>
<reference key="2">
    <citation type="journal article" date="2005" name="Science">
        <title>The transcriptional landscape of the mammalian genome.</title>
        <authorList>
            <person name="Carninci P."/>
            <person name="Kasukawa T."/>
            <person name="Katayama S."/>
            <person name="Gough J."/>
            <person name="Frith M.C."/>
            <person name="Maeda N."/>
            <person name="Oyama R."/>
            <person name="Ravasi T."/>
            <person name="Lenhard B."/>
            <person name="Wells C."/>
            <person name="Kodzius R."/>
            <person name="Shimokawa K."/>
            <person name="Bajic V.B."/>
            <person name="Brenner S.E."/>
            <person name="Batalov S."/>
            <person name="Forrest A.R."/>
            <person name="Zavolan M."/>
            <person name="Davis M.J."/>
            <person name="Wilming L.G."/>
            <person name="Aidinis V."/>
            <person name="Allen J.E."/>
            <person name="Ambesi-Impiombato A."/>
            <person name="Apweiler R."/>
            <person name="Aturaliya R.N."/>
            <person name="Bailey T.L."/>
            <person name="Bansal M."/>
            <person name="Baxter L."/>
            <person name="Beisel K.W."/>
            <person name="Bersano T."/>
            <person name="Bono H."/>
            <person name="Chalk A.M."/>
            <person name="Chiu K.P."/>
            <person name="Choudhary V."/>
            <person name="Christoffels A."/>
            <person name="Clutterbuck D.R."/>
            <person name="Crowe M.L."/>
            <person name="Dalla E."/>
            <person name="Dalrymple B.P."/>
            <person name="de Bono B."/>
            <person name="Della Gatta G."/>
            <person name="di Bernardo D."/>
            <person name="Down T."/>
            <person name="Engstrom P."/>
            <person name="Fagiolini M."/>
            <person name="Faulkner G."/>
            <person name="Fletcher C.F."/>
            <person name="Fukushima T."/>
            <person name="Furuno M."/>
            <person name="Futaki S."/>
            <person name="Gariboldi M."/>
            <person name="Georgii-Hemming P."/>
            <person name="Gingeras T.R."/>
            <person name="Gojobori T."/>
            <person name="Green R.E."/>
            <person name="Gustincich S."/>
            <person name="Harbers M."/>
            <person name="Hayashi Y."/>
            <person name="Hensch T.K."/>
            <person name="Hirokawa N."/>
            <person name="Hill D."/>
            <person name="Huminiecki L."/>
            <person name="Iacono M."/>
            <person name="Ikeo K."/>
            <person name="Iwama A."/>
            <person name="Ishikawa T."/>
            <person name="Jakt M."/>
            <person name="Kanapin A."/>
            <person name="Katoh M."/>
            <person name="Kawasawa Y."/>
            <person name="Kelso J."/>
            <person name="Kitamura H."/>
            <person name="Kitano H."/>
            <person name="Kollias G."/>
            <person name="Krishnan S.P."/>
            <person name="Kruger A."/>
            <person name="Kummerfeld S.K."/>
            <person name="Kurochkin I.V."/>
            <person name="Lareau L.F."/>
            <person name="Lazarevic D."/>
            <person name="Lipovich L."/>
            <person name="Liu J."/>
            <person name="Liuni S."/>
            <person name="McWilliam S."/>
            <person name="Madan Babu M."/>
            <person name="Madera M."/>
            <person name="Marchionni L."/>
            <person name="Matsuda H."/>
            <person name="Matsuzawa S."/>
            <person name="Miki H."/>
            <person name="Mignone F."/>
            <person name="Miyake S."/>
            <person name="Morris K."/>
            <person name="Mottagui-Tabar S."/>
            <person name="Mulder N."/>
            <person name="Nakano N."/>
            <person name="Nakauchi H."/>
            <person name="Ng P."/>
            <person name="Nilsson R."/>
            <person name="Nishiguchi S."/>
            <person name="Nishikawa S."/>
            <person name="Nori F."/>
            <person name="Ohara O."/>
            <person name="Okazaki Y."/>
            <person name="Orlando V."/>
            <person name="Pang K.C."/>
            <person name="Pavan W.J."/>
            <person name="Pavesi G."/>
            <person name="Pesole G."/>
            <person name="Petrovsky N."/>
            <person name="Piazza S."/>
            <person name="Reed J."/>
            <person name="Reid J.F."/>
            <person name="Ring B.Z."/>
            <person name="Ringwald M."/>
            <person name="Rost B."/>
            <person name="Ruan Y."/>
            <person name="Salzberg S.L."/>
            <person name="Sandelin A."/>
            <person name="Schneider C."/>
            <person name="Schoenbach C."/>
            <person name="Sekiguchi K."/>
            <person name="Semple C.A."/>
            <person name="Seno S."/>
            <person name="Sessa L."/>
            <person name="Sheng Y."/>
            <person name="Shibata Y."/>
            <person name="Shimada H."/>
            <person name="Shimada K."/>
            <person name="Silva D."/>
            <person name="Sinclair B."/>
            <person name="Sperling S."/>
            <person name="Stupka E."/>
            <person name="Sugiura K."/>
            <person name="Sultana R."/>
            <person name="Takenaka Y."/>
            <person name="Taki K."/>
            <person name="Tammoja K."/>
            <person name="Tan S.L."/>
            <person name="Tang S."/>
            <person name="Taylor M.S."/>
            <person name="Tegner J."/>
            <person name="Teichmann S.A."/>
            <person name="Ueda H.R."/>
            <person name="van Nimwegen E."/>
            <person name="Verardo R."/>
            <person name="Wei C.L."/>
            <person name="Yagi K."/>
            <person name="Yamanishi H."/>
            <person name="Zabarovsky E."/>
            <person name="Zhu S."/>
            <person name="Zimmer A."/>
            <person name="Hide W."/>
            <person name="Bult C."/>
            <person name="Grimmond S.M."/>
            <person name="Teasdale R.D."/>
            <person name="Liu E.T."/>
            <person name="Brusic V."/>
            <person name="Quackenbush J."/>
            <person name="Wahlestedt C."/>
            <person name="Mattick J.S."/>
            <person name="Hume D.A."/>
            <person name="Kai C."/>
            <person name="Sasaki D."/>
            <person name="Tomaru Y."/>
            <person name="Fukuda S."/>
            <person name="Kanamori-Katayama M."/>
            <person name="Suzuki M."/>
            <person name="Aoki J."/>
            <person name="Arakawa T."/>
            <person name="Iida J."/>
            <person name="Imamura K."/>
            <person name="Itoh M."/>
            <person name="Kato T."/>
            <person name="Kawaji H."/>
            <person name="Kawagashira N."/>
            <person name="Kawashima T."/>
            <person name="Kojima M."/>
            <person name="Kondo S."/>
            <person name="Konno H."/>
            <person name="Nakano K."/>
            <person name="Ninomiya N."/>
            <person name="Nishio T."/>
            <person name="Okada M."/>
            <person name="Plessy C."/>
            <person name="Shibata K."/>
            <person name="Shiraki T."/>
            <person name="Suzuki S."/>
            <person name="Tagami M."/>
            <person name="Waki K."/>
            <person name="Watahiki A."/>
            <person name="Okamura-Oho Y."/>
            <person name="Suzuki H."/>
            <person name="Kawai J."/>
            <person name="Hayashizaki Y."/>
        </authorList>
    </citation>
    <scope>NUCLEOTIDE SEQUENCE [LARGE SCALE MRNA]</scope>
    <source>
        <strain>C57BL/6J</strain>
        <tissue>Medulla oblongata</tissue>
    </source>
</reference>
<reference key="3">
    <citation type="journal article" date="2009" name="PLoS Biol.">
        <title>Lineage-specific biology revealed by a finished genome assembly of the mouse.</title>
        <authorList>
            <person name="Church D.M."/>
            <person name="Goodstadt L."/>
            <person name="Hillier L.W."/>
            <person name="Zody M.C."/>
            <person name="Goldstein S."/>
            <person name="She X."/>
            <person name="Bult C.J."/>
            <person name="Agarwala R."/>
            <person name="Cherry J.L."/>
            <person name="DiCuccio M."/>
            <person name="Hlavina W."/>
            <person name="Kapustin Y."/>
            <person name="Meric P."/>
            <person name="Maglott D."/>
            <person name="Birtle Z."/>
            <person name="Marques A.C."/>
            <person name="Graves T."/>
            <person name="Zhou S."/>
            <person name="Teague B."/>
            <person name="Potamousis K."/>
            <person name="Churas C."/>
            <person name="Place M."/>
            <person name="Herschleb J."/>
            <person name="Runnheim R."/>
            <person name="Forrest D."/>
            <person name="Amos-Landgraf J."/>
            <person name="Schwartz D.C."/>
            <person name="Cheng Z."/>
            <person name="Lindblad-Toh K."/>
            <person name="Eichler E.E."/>
            <person name="Ponting C.P."/>
        </authorList>
    </citation>
    <scope>NUCLEOTIDE SEQUENCE [LARGE SCALE GENOMIC DNA]</scope>
    <source>
        <strain>C57BL/6J</strain>
    </source>
</reference>
<reference key="4">
    <citation type="journal article" date="2004" name="Genome Res.">
        <title>The status, quality, and expansion of the NIH full-length cDNA project: the Mammalian Gene Collection (MGC).</title>
        <authorList>
            <consortium name="The MGC Project Team"/>
        </authorList>
    </citation>
    <scope>NUCLEOTIDE SEQUENCE [LARGE SCALE MRNA]</scope>
    <source>
        <tissue>Brain</tissue>
    </source>
</reference>
<reference key="5">
    <citation type="journal article" date="2017" name="Sci. Rep.">
        <title>The purinergic receptor P2X5 regulates inflammasome activity and hyper-multinucleation of murine osteoclasts.</title>
        <authorList>
            <person name="Kim H."/>
            <person name="Walsh M.C."/>
            <person name="Takegahara N."/>
            <person name="Middleton S.A."/>
            <person name="Shin H.I."/>
            <person name="Kim J."/>
            <person name="Choi Y."/>
        </authorList>
    </citation>
    <scope>DISRUPTION PHENOTYPE</scope>
    <scope>FUNCTION</scope>
</reference>
<reference key="6">
    <citation type="journal article" date="2023" name="Elife">
        <title>Ion permeation pathway within the internal pore of P2X receptor channels.</title>
        <authorList>
            <person name="Tam S.W."/>
            <person name="Huffer K."/>
            <person name="Li M."/>
            <person name="Swartz K.J."/>
        </authorList>
    </citation>
    <scope>FUNCTION</scope>
    <scope>TRANSPORTER ACTIVITY</scope>
    <scope>MUTAGENESIS OF LYS-17</scope>
</reference>
<comment type="function">
    <text evidence="4 6 7 8">ATP-gated nonselective transmembrane cation channel permeable to potassium, sodium and calcium (PubMed:11404011, PubMed:36940138). Unlike other P2RX receptors, the P2X5 receptor is also permeable to chloride (By similarity). Acts as an important regulator of inflammatory-related bone loss and osteoclast multinucleation (PubMed:28298636).</text>
</comment>
<comment type="catalytic activity">
    <reaction evidence="8">
        <text>Na(+)(in) = Na(+)(out)</text>
        <dbReference type="Rhea" id="RHEA:34963"/>
        <dbReference type="ChEBI" id="CHEBI:29101"/>
    </reaction>
</comment>
<comment type="catalytic activity">
    <reaction evidence="4">
        <text>Ca(2+)(in) = Ca(2+)(out)</text>
        <dbReference type="Rhea" id="RHEA:29671"/>
        <dbReference type="ChEBI" id="CHEBI:29108"/>
    </reaction>
</comment>
<comment type="catalytic activity">
    <reaction evidence="8">
        <text>chloride(in) = chloride(out)</text>
        <dbReference type="Rhea" id="RHEA:29823"/>
        <dbReference type="ChEBI" id="CHEBI:17996"/>
    </reaction>
</comment>
<comment type="activity regulation">
    <text evidence="2 6">Activated by ATP (PubMed:11404011). Slowly desensitizing. Not activated by ATP agonist alpha/beta-methylene-ATP. Highly sensitive to the antagonists suramin and PPADS (By similarity).</text>
</comment>
<comment type="subunit">
    <text evidence="2">Functional P2XRs are organized as homomeric and heteromeric trimers. Homotrimer. Forms heterotrimer with P2RX1.</text>
</comment>
<comment type="subcellular location">
    <subcellularLocation>
        <location evidence="4">Cell membrane</location>
        <topology evidence="3">Multi-pass membrane protein</topology>
    </subcellularLocation>
</comment>
<comment type="tissue specificity">
    <text evidence="7">Expressed in a number of tissues, with highest levels detected in heart and kidney.</text>
</comment>
<comment type="domain">
    <text evidence="4">The second transmembrane domain and the conserved Asp-355 are essential for P2RX5 subunit assembly.</text>
</comment>
<comment type="disruption phenotype">
    <text evidence="7">P2rx5 deficiency results in protection against LPS-induced inflammatory bone loss in a manner that involves defects in both inflammasome activation and IL-1beta production.</text>
</comment>
<comment type="similarity">
    <text evidence="9">Belongs to the P2X receptor family.</text>
</comment>
<protein>
    <recommendedName>
        <fullName>P2X purinoceptor 5</fullName>
        <shortName>P2X5</shortName>
    </recommendedName>
</protein>